<organism>
    <name type="scientific">Pasteurella multocida (strain Pm70)</name>
    <dbReference type="NCBI Taxonomy" id="272843"/>
    <lineage>
        <taxon>Bacteria</taxon>
        <taxon>Pseudomonadati</taxon>
        <taxon>Pseudomonadota</taxon>
        <taxon>Gammaproteobacteria</taxon>
        <taxon>Pasteurellales</taxon>
        <taxon>Pasteurellaceae</taxon>
        <taxon>Pasteurella</taxon>
    </lineage>
</organism>
<dbReference type="EMBL" id="AE004439">
    <property type="protein sequence ID" value="AAK03828.1"/>
    <property type="molecule type" value="Genomic_DNA"/>
</dbReference>
<dbReference type="RefSeq" id="WP_005718825.1">
    <property type="nucleotide sequence ID" value="NC_002663.1"/>
</dbReference>
<dbReference type="SMR" id="Q9CK84"/>
<dbReference type="STRING" id="272843.PM1744"/>
<dbReference type="EnsemblBacteria" id="AAK03828">
    <property type="protein sequence ID" value="AAK03828"/>
    <property type="gene ID" value="PM1744"/>
</dbReference>
<dbReference type="GeneID" id="77206674"/>
<dbReference type="KEGG" id="pmu:PM1744"/>
<dbReference type="HOGENOM" id="CLU_067287_1_0_6"/>
<dbReference type="OrthoDB" id="9809075at2"/>
<dbReference type="Proteomes" id="UP000000809">
    <property type="component" value="Chromosome"/>
</dbReference>
<dbReference type="GO" id="GO:0005829">
    <property type="term" value="C:cytosol"/>
    <property type="evidence" value="ECO:0007669"/>
    <property type="project" value="TreeGrafter"/>
</dbReference>
<dbReference type="GO" id="GO:0006353">
    <property type="term" value="P:DNA-templated transcription termination"/>
    <property type="evidence" value="ECO:0007669"/>
    <property type="project" value="UniProtKB-UniRule"/>
</dbReference>
<dbReference type="GO" id="GO:0032784">
    <property type="term" value="P:regulation of DNA-templated transcription elongation"/>
    <property type="evidence" value="ECO:0007669"/>
    <property type="project" value="InterPro"/>
</dbReference>
<dbReference type="GO" id="GO:0031564">
    <property type="term" value="P:transcription antitermination"/>
    <property type="evidence" value="ECO:0007669"/>
    <property type="project" value="UniProtKB-UniRule"/>
</dbReference>
<dbReference type="GO" id="GO:0140673">
    <property type="term" value="P:transcription elongation-coupled chromatin remodeling"/>
    <property type="evidence" value="ECO:0007669"/>
    <property type="project" value="InterPro"/>
</dbReference>
<dbReference type="CDD" id="cd06091">
    <property type="entry name" value="KOW_NusG"/>
    <property type="match status" value="1"/>
</dbReference>
<dbReference type="CDD" id="cd09891">
    <property type="entry name" value="NGN_Bact_1"/>
    <property type="match status" value="1"/>
</dbReference>
<dbReference type="FunFam" id="2.30.30.30:FF:000002">
    <property type="entry name" value="Transcription termination/antitermination factor NusG"/>
    <property type="match status" value="1"/>
</dbReference>
<dbReference type="FunFam" id="3.30.70.940:FF:000001">
    <property type="entry name" value="Transcription termination/antitermination protein NusG"/>
    <property type="match status" value="1"/>
</dbReference>
<dbReference type="Gene3D" id="2.30.30.30">
    <property type="match status" value="1"/>
</dbReference>
<dbReference type="Gene3D" id="3.30.70.940">
    <property type="entry name" value="NusG, N-terminal domain"/>
    <property type="match status" value="1"/>
</dbReference>
<dbReference type="HAMAP" id="MF_00948">
    <property type="entry name" value="NusG"/>
    <property type="match status" value="1"/>
</dbReference>
<dbReference type="InterPro" id="IPR005824">
    <property type="entry name" value="KOW"/>
</dbReference>
<dbReference type="InterPro" id="IPR047050">
    <property type="entry name" value="NGN"/>
</dbReference>
<dbReference type="InterPro" id="IPR006645">
    <property type="entry name" value="NGN-like_dom"/>
</dbReference>
<dbReference type="InterPro" id="IPR036735">
    <property type="entry name" value="NGN_dom_sf"/>
</dbReference>
<dbReference type="InterPro" id="IPR043425">
    <property type="entry name" value="NusG-like"/>
</dbReference>
<dbReference type="InterPro" id="IPR014722">
    <property type="entry name" value="Rib_uL2_dom2"/>
</dbReference>
<dbReference type="InterPro" id="IPR001062">
    <property type="entry name" value="Transcrpt_antiterm_NusG"/>
</dbReference>
<dbReference type="InterPro" id="IPR015869">
    <property type="entry name" value="Transcrpt_antiterm_NusG_bac_CS"/>
</dbReference>
<dbReference type="InterPro" id="IPR008991">
    <property type="entry name" value="Translation_prot_SH3-like_sf"/>
</dbReference>
<dbReference type="NCBIfam" id="TIGR00922">
    <property type="entry name" value="nusG"/>
    <property type="match status" value="1"/>
</dbReference>
<dbReference type="PANTHER" id="PTHR30265">
    <property type="entry name" value="RHO-INTERACTING TRANSCRIPTION TERMINATION FACTOR NUSG"/>
    <property type="match status" value="1"/>
</dbReference>
<dbReference type="PANTHER" id="PTHR30265:SF2">
    <property type="entry name" value="TRANSCRIPTION TERMINATION_ANTITERMINATION PROTEIN NUSG"/>
    <property type="match status" value="1"/>
</dbReference>
<dbReference type="Pfam" id="PF00467">
    <property type="entry name" value="KOW"/>
    <property type="match status" value="1"/>
</dbReference>
<dbReference type="Pfam" id="PF02357">
    <property type="entry name" value="NusG"/>
    <property type="match status" value="1"/>
</dbReference>
<dbReference type="PRINTS" id="PR00338">
    <property type="entry name" value="NUSGTNSCPFCT"/>
</dbReference>
<dbReference type="SMART" id="SM00739">
    <property type="entry name" value="KOW"/>
    <property type="match status" value="1"/>
</dbReference>
<dbReference type="SMART" id="SM00738">
    <property type="entry name" value="NGN"/>
    <property type="match status" value="1"/>
</dbReference>
<dbReference type="SUPFAM" id="SSF82679">
    <property type="entry name" value="N-utilization substance G protein NusG, N-terminal domain"/>
    <property type="match status" value="1"/>
</dbReference>
<dbReference type="SUPFAM" id="SSF50104">
    <property type="entry name" value="Translation proteins SH3-like domain"/>
    <property type="match status" value="1"/>
</dbReference>
<dbReference type="PROSITE" id="PS01014">
    <property type="entry name" value="NUSG"/>
    <property type="match status" value="1"/>
</dbReference>
<gene>
    <name evidence="1" type="primary">nusG</name>
    <name type="ordered locus">PM1744</name>
</gene>
<keyword id="KW-1185">Reference proteome</keyword>
<keyword id="KW-0804">Transcription</keyword>
<keyword id="KW-0889">Transcription antitermination</keyword>
<keyword id="KW-0805">Transcription regulation</keyword>
<keyword id="KW-0806">Transcription termination</keyword>
<feature type="chain" id="PRO_0000113939" description="Transcription termination/antitermination protein NusG">
    <location>
        <begin position="1"/>
        <end position="183"/>
    </location>
</feature>
<feature type="domain" description="KOW" evidence="1">
    <location>
        <begin position="131"/>
        <end position="161"/>
    </location>
</feature>
<evidence type="ECO:0000255" key="1">
    <source>
        <dbReference type="HAMAP-Rule" id="MF_00948"/>
    </source>
</evidence>
<protein>
    <recommendedName>
        <fullName evidence="1">Transcription termination/antitermination protein NusG</fullName>
    </recommendedName>
</protein>
<accession>Q9CK84</accession>
<reference key="1">
    <citation type="journal article" date="2001" name="Proc. Natl. Acad. Sci. U.S.A.">
        <title>Complete genomic sequence of Pasteurella multocida Pm70.</title>
        <authorList>
            <person name="May B.J."/>
            <person name="Zhang Q."/>
            <person name="Li L.L."/>
            <person name="Paustian M.L."/>
            <person name="Whittam T.S."/>
            <person name="Kapur V."/>
        </authorList>
    </citation>
    <scope>NUCLEOTIDE SEQUENCE [LARGE SCALE GENOMIC DNA]</scope>
    <source>
        <strain>Pm70</strain>
    </source>
</reference>
<comment type="function">
    <text evidence="1">Participates in transcription elongation, termination and antitermination.</text>
</comment>
<comment type="similarity">
    <text evidence="1">Belongs to the NusG family.</text>
</comment>
<sequence length="183" mass="21114">MTETTTKKRWYVLQAFSGFEGRVATTLREYIKLHQMEDQFGEVLVPTEEVVENVAGKRRKSERKFFPGYVLVQMEMNDETWHLVRSVPRVMGFIGGTADKPAPISQREADRILNRLQESSEKPRHRKEFQPGEEVRVTEGPFADFNGTVEEVDYEKGRLKVSVSIFGRATPVELEFSQVEKTN</sequence>
<name>NUSG_PASMU</name>
<proteinExistence type="inferred from homology"/>